<organism>
    <name type="scientific">Debaryomyces hansenii (strain ATCC 36239 / CBS 767 / BCRC 21394 / JCM 1990 / NBRC 0083 / IGC 2968)</name>
    <name type="common">Yeast</name>
    <name type="synonym">Torulaspora hansenii</name>
    <dbReference type="NCBI Taxonomy" id="284592"/>
    <lineage>
        <taxon>Eukaryota</taxon>
        <taxon>Fungi</taxon>
        <taxon>Dikarya</taxon>
        <taxon>Ascomycota</taxon>
        <taxon>Saccharomycotina</taxon>
        <taxon>Pichiomycetes</taxon>
        <taxon>Debaryomycetaceae</taxon>
        <taxon>Debaryomyces</taxon>
    </lineage>
</organism>
<evidence type="ECO:0000255" key="1">
    <source>
        <dbReference type="HAMAP-Rule" id="MF_03136"/>
    </source>
</evidence>
<sequence>MVKKILLINGPNLNSLGTREPEKYGTTTLKDIEQAAIEQAKAKGSEMAVYQNNTEGFIVDRIHEAKKQGVEYILINAGAYTHTSVAIRDALSAVAIPFIEIHITNVHSREEFRHKSYLSDTAVAVICGLGVYGYTAAIDFALNK</sequence>
<gene>
    <name evidence="1" type="primary">DQD1</name>
    <name type="ordered locus">DEHA2F23584g</name>
</gene>
<comment type="function">
    <text evidence="1">Is involved in the catabolism of quinate. Allows the utilization of quinate as carbon source via the beta-ketoadipate pathway.</text>
</comment>
<comment type="catalytic activity">
    <reaction evidence="1">
        <text>3-dehydroquinate = 3-dehydroshikimate + H2O</text>
        <dbReference type="Rhea" id="RHEA:21096"/>
        <dbReference type="ChEBI" id="CHEBI:15377"/>
        <dbReference type="ChEBI" id="CHEBI:16630"/>
        <dbReference type="ChEBI" id="CHEBI:32364"/>
        <dbReference type="EC" id="4.2.1.10"/>
    </reaction>
</comment>
<comment type="pathway">
    <text evidence="1">Aromatic compound metabolism; 3,4-dihydroxybenzoate biosynthesis; 3,4-dihydroxybenzoate from 3-dehydroquinate: step 1/2.</text>
</comment>
<comment type="subunit">
    <text evidence="1">Homododecamer. Adopts a ring-like structure, composed of an arrangement of two hexameric rings stacked on top of one another.</text>
</comment>
<comment type="similarity">
    <text evidence="1">Belongs to the type-II 3-dehydroquinase family.</text>
</comment>
<keyword id="KW-0456">Lyase</keyword>
<keyword id="KW-0672">Quinate metabolism</keyword>
<keyword id="KW-1185">Reference proteome</keyword>
<reference key="1">
    <citation type="journal article" date="2004" name="Nature">
        <title>Genome evolution in yeasts.</title>
        <authorList>
            <person name="Dujon B."/>
            <person name="Sherman D."/>
            <person name="Fischer G."/>
            <person name="Durrens P."/>
            <person name="Casaregola S."/>
            <person name="Lafontaine I."/>
            <person name="de Montigny J."/>
            <person name="Marck C."/>
            <person name="Neuveglise C."/>
            <person name="Talla E."/>
            <person name="Goffard N."/>
            <person name="Frangeul L."/>
            <person name="Aigle M."/>
            <person name="Anthouard V."/>
            <person name="Babour A."/>
            <person name="Barbe V."/>
            <person name="Barnay S."/>
            <person name="Blanchin S."/>
            <person name="Beckerich J.-M."/>
            <person name="Beyne E."/>
            <person name="Bleykasten C."/>
            <person name="Boisrame A."/>
            <person name="Boyer J."/>
            <person name="Cattolico L."/>
            <person name="Confanioleri F."/>
            <person name="de Daruvar A."/>
            <person name="Despons L."/>
            <person name="Fabre E."/>
            <person name="Fairhead C."/>
            <person name="Ferry-Dumazet H."/>
            <person name="Groppi A."/>
            <person name="Hantraye F."/>
            <person name="Hennequin C."/>
            <person name="Jauniaux N."/>
            <person name="Joyet P."/>
            <person name="Kachouri R."/>
            <person name="Kerrest A."/>
            <person name="Koszul R."/>
            <person name="Lemaire M."/>
            <person name="Lesur I."/>
            <person name="Ma L."/>
            <person name="Muller H."/>
            <person name="Nicaud J.-M."/>
            <person name="Nikolski M."/>
            <person name="Oztas S."/>
            <person name="Ozier-Kalogeropoulos O."/>
            <person name="Pellenz S."/>
            <person name="Potier S."/>
            <person name="Richard G.-F."/>
            <person name="Straub M.-L."/>
            <person name="Suleau A."/>
            <person name="Swennen D."/>
            <person name="Tekaia F."/>
            <person name="Wesolowski-Louvel M."/>
            <person name="Westhof E."/>
            <person name="Wirth B."/>
            <person name="Zeniou-Meyer M."/>
            <person name="Zivanovic Y."/>
            <person name="Bolotin-Fukuhara M."/>
            <person name="Thierry A."/>
            <person name="Bouchier C."/>
            <person name="Caudron B."/>
            <person name="Scarpelli C."/>
            <person name="Gaillardin C."/>
            <person name="Weissenbach J."/>
            <person name="Wincker P."/>
            <person name="Souciet J.-L."/>
        </authorList>
    </citation>
    <scope>NUCLEOTIDE SEQUENCE [LARGE SCALE GENOMIC DNA]</scope>
    <source>
        <strain>ATCC 36239 / CBS 767 / BCRC 21394 / JCM 1990 / NBRC 0083 / IGC 2968</strain>
    </source>
</reference>
<feature type="chain" id="PRO_0000402365" description="Catabolic 3-dehydroquinase">
    <location>
        <begin position="1"/>
        <end position="144"/>
    </location>
</feature>
<feature type="active site" description="Proton acceptor" evidence="1">
    <location>
        <position position="24"/>
    </location>
</feature>
<feature type="active site" description="Proton donor" evidence="1">
    <location>
        <position position="102"/>
    </location>
</feature>
<feature type="binding site" evidence="1">
    <location>
        <position position="76"/>
    </location>
    <ligand>
        <name>substrate</name>
    </ligand>
</feature>
<feature type="binding site" evidence="1">
    <location>
        <position position="82"/>
    </location>
    <ligand>
        <name>substrate</name>
    </ligand>
</feature>
<feature type="binding site" evidence="1">
    <location>
        <position position="89"/>
    </location>
    <ligand>
        <name>substrate</name>
    </ligand>
</feature>
<feature type="binding site" evidence="1">
    <location>
        <begin position="103"/>
        <end position="104"/>
    </location>
    <ligand>
        <name>substrate</name>
    </ligand>
</feature>
<feature type="binding site" evidence="1">
    <location>
        <position position="113"/>
    </location>
    <ligand>
        <name>substrate</name>
    </ligand>
</feature>
<feature type="site" description="Transition state stabilizer" evidence="1">
    <location>
        <position position="19"/>
    </location>
</feature>
<dbReference type="EC" id="4.2.1.10" evidence="1"/>
<dbReference type="EMBL" id="CR382138">
    <property type="protein sequence ID" value="CAG89774.2"/>
    <property type="molecule type" value="Genomic_DNA"/>
</dbReference>
<dbReference type="RefSeq" id="XP_461368.2">
    <property type="nucleotide sequence ID" value="XM_461368.1"/>
</dbReference>
<dbReference type="SMR" id="Q6BKA3"/>
<dbReference type="STRING" id="284592.Q6BKA3"/>
<dbReference type="GeneID" id="2903923"/>
<dbReference type="KEGG" id="dha:DEHA2F23584g"/>
<dbReference type="VEuPathDB" id="FungiDB:DEHA2F23584g"/>
<dbReference type="eggNOG" id="ENOG502S1A9">
    <property type="taxonomic scope" value="Eukaryota"/>
</dbReference>
<dbReference type="HOGENOM" id="CLU_090968_1_0_1"/>
<dbReference type="InParanoid" id="Q6BKA3"/>
<dbReference type="OMA" id="WIHEAGR"/>
<dbReference type="OrthoDB" id="8191625at2759"/>
<dbReference type="UniPathway" id="UPA00088">
    <property type="reaction ID" value="UER00178"/>
</dbReference>
<dbReference type="Proteomes" id="UP000000599">
    <property type="component" value="Chromosome F"/>
</dbReference>
<dbReference type="GO" id="GO:0003855">
    <property type="term" value="F:3-dehydroquinate dehydratase activity"/>
    <property type="evidence" value="ECO:0007669"/>
    <property type="project" value="UniProtKB-UniRule"/>
</dbReference>
<dbReference type="GO" id="GO:0046279">
    <property type="term" value="P:3,4-dihydroxybenzoate biosynthetic process"/>
    <property type="evidence" value="ECO:0007669"/>
    <property type="project" value="UniProtKB-UniRule"/>
</dbReference>
<dbReference type="GO" id="GO:0019631">
    <property type="term" value="P:quinate catabolic process"/>
    <property type="evidence" value="ECO:0007669"/>
    <property type="project" value="TreeGrafter"/>
</dbReference>
<dbReference type="CDD" id="cd00466">
    <property type="entry name" value="DHQase_II"/>
    <property type="match status" value="1"/>
</dbReference>
<dbReference type="Gene3D" id="3.40.50.9100">
    <property type="entry name" value="Dehydroquinase, class II"/>
    <property type="match status" value="1"/>
</dbReference>
<dbReference type="HAMAP" id="MF_00169">
    <property type="entry name" value="AroQ"/>
    <property type="match status" value="1"/>
</dbReference>
<dbReference type="InterPro" id="IPR001874">
    <property type="entry name" value="DHquinase_II"/>
</dbReference>
<dbReference type="InterPro" id="IPR018509">
    <property type="entry name" value="DHquinase_II_CS"/>
</dbReference>
<dbReference type="InterPro" id="IPR036441">
    <property type="entry name" value="DHquinase_II_sf"/>
</dbReference>
<dbReference type="NCBIfam" id="TIGR01088">
    <property type="entry name" value="aroQ"/>
    <property type="match status" value="1"/>
</dbReference>
<dbReference type="NCBIfam" id="NF003804">
    <property type="entry name" value="PRK05395.1-1"/>
    <property type="match status" value="1"/>
</dbReference>
<dbReference type="NCBIfam" id="NF003805">
    <property type="entry name" value="PRK05395.1-2"/>
    <property type="match status" value="1"/>
</dbReference>
<dbReference type="NCBIfam" id="NF003806">
    <property type="entry name" value="PRK05395.1-3"/>
    <property type="match status" value="1"/>
</dbReference>
<dbReference type="NCBIfam" id="NF003807">
    <property type="entry name" value="PRK05395.1-4"/>
    <property type="match status" value="1"/>
</dbReference>
<dbReference type="PANTHER" id="PTHR21272">
    <property type="entry name" value="CATABOLIC 3-DEHYDROQUINASE"/>
    <property type="match status" value="1"/>
</dbReference>
<dbReference type="PANTHER" id="PTHR21272:SF3">
    <property type="entry name" value="CATABOLIC 3-DEHYDROQUINASE"/>
    <property type="match status" value="1"/>
</dbReference>
<dbReference type="Pfam" id="PF01220">
    <property type="entry name" value="DHquinase_II"/>
    <property type="match status" value="1"/>
</dbReference>
<dbReference type="PIRSF" id="PIRSF001399">
    <property type="entry name" value="DHquinase_II"/>
    <property type="match status" value="1"/>
</dbReference>
<dbReference type="SUPFAM" id="SSF52304">
    <property type="entry name" value="Type II 3-dehydroquinate dehydratase"/>
    <property type="match status" value="1"/>
</dbReference>
<dbReference type="PROSITE" id="PS01029">
    <property type="entry name" value="DEHYDROQUINASE_II"/>
    <property type="match status" value="1"/>
</dbReference>
<name>3DHQ_DEBHA</name>
<protein>
    <recommendedName>
        <fullName evidence="1">Catabolic 3-dehydroquinase</fullName>
        <shortName evidence="1">cDHQase</shortName>
        <ecNumber evidence="1">4.2.1.10</ecNumber>
    </recommendedName>
    <alternativeName>
        <fullName evidence="1">3-dehydroquinate dehydratase</fullName>
    </alternativeName>
</protein>
<accession>Q6BKA3</accession>
<proteinExistence type="inferred from homology"/>